<reference key="1">
    <citation type="journal article" date="2002" name="Nature">
        <title>The genome sequence of Schizosaccharomyces pombe.</title>
        <authorList>
            <person name="Wood V."/>
            <person name="Gwilliam R."/>
            <person name="Rajandream M.A."/>
            <person name="Lyne M.H."/>
            <person name="Lyne R."/>
            <person name="Stewart A."/>
            <person name="Sgouros J.G."/>
            <person name="Peat N."/>
            <person name="Hayles J."/>
            <person name="Baker S.G."/>
            <person name="Basham D."/>
            <person name="Bowman S."/>
            <person name="Brooks K."/>
            <person name="Brown D."/>
            <person name="Brown S."/>
            <person name="Chillingworth T."/>
            <person name="Churcher C.M."/>
            <person name="Collins M."/>
            <person name="Connor R."/>
            <person name="Cronin A."/>
            <person name="Davis P."/>
            <person name="Feltwell T."/>
            <person name="Fraser A."/>
            <person name="Gentles S."/>
            <person name="Goble A."/>
            <person name="Hamlin N."/>
            <person name="Harris D.E."/>
            <person name="Hidalgo J."/>
            <person name="Hodgson G."/>
            <person name="Holroyd S."/>
            <person name="Hornsby T."/>
            <person name="Howarth S."/>
            <person name="Huckle E.J."/>
            <person name="Hunt S."/>
            <person name="Jagels K."/>
            <person name="James K.D."/>
            <person name="Jones L."/>
            <person name="Jones M."/>
            <person name="Leather S."/>
            <person name="McDonald S."/>
            <person name="McLean J."/>
            <person name="Mooney P."/>
            <person name="Moule S."/>
            <person name="Mungall K.L."/>
            <person name="Murphy L.D."/>
            <person name="Niblett D."/>
            <person name="Odell C."/>
            <person name="Oliver K."/>
            <person name="O'Neil S."/>
            <person name="Pearson D."/>
            <person name="Quail M.A."/>
            <person name="Rabbinowitsch E."/>
            <person name="Rutherford K.M."/>
            <person name="Rutter S."/>
            <person name="Saunders D."/>
            <person name="Seeger K."/>
            <person name="Sharp S."/>
            <person name="Skelton J."/>
            <person name="Simmonds M.N."/>
            <person name="Squares R."/>
            <person name="Squares S."/>
            <person name="Stevens K."/>
            <person name="Taylor K."/>
            <person name="Taylor R.G."/>
            <person name="Tivey A."/>
            <person name="Walsh S.V."/>
            <person name="Warren T."/>
            <person name="Whitehead S."/>
            <person name="Woodward J.R."/>
            <person name="Volckaert G."/>
            <person name="Aert R."/>
            <person name="Robben J."/>
            <person name="Grymonprez B."/>
            <person name="Weltjens I."/>
            <person name="Vanstreels E."/>
            <person name="Rieger M."/>
            <person name="Schaefer M."/>
            <person name="Mueller-Auer S."/>
            <person name="Gabel C."/>
            <person name="Fuchs M."/>
            <person name="Duesterhoeft A."/>
            <person name="Fritzc C."/>
            <person name="Holzer E."/>
            <person name="Moestl D."/>
            <person name="Hilbert H."/>
            <person name="Borzym K."/>
            <person name="Langer I."/>
            <person name="Beck A."/>
            <person name="Lehrach H."/>
            <person name="Reinhardt R."/>
            <person name="Pohl T.M."/>
            <person name="Eger P."/>
            <person name="Zimmermann W."/>
            <person name="Wedler H."/>
            <person name="Wambutt R."/>
            <person name="Purnelle B."/>
            <person name="Goffeau A."/>
            <person name="Cadieu E."/>
            <person name="Dreano S."/>
            <person name="Gloux S."/>
            <person name="Lelaure V."/>
            <person name="Mottier S."/>
            <person name="Galibert F."/>
            <person name="Aves S.J."/>
            <person name="Xiang Z."/>
            <person name="Hunt C."/>
            <person name="Moore K."/>
            <person name="Hurst S.M."/>
            <person name="Lucas M."/>
            <person name="Rochet M."/>
            <person name="Gaillardin C."/>
            <person name="Tallada V.A."/>
            <person name="Garzon A."/>
            <person name="Thode G."/>
            <person name="Daga R.R."/>
            <person name="Cruzado L."/>
            <person name="Jimenez J."/>
            <person name="Sanchez M."/>
            <person name="del Rey F."/>
            <person name="Benito J."/>
            <person name="Dominguez A."/>
            <person name="Revuelta J.L."/>
            <person name="Moreno S."/>
            <person name="Armstrong J."/>
            <person name="Forsburg S.L."/>
            <person name="Cerutti L."/>
            <person name="Lowe T."/>
            <person name="McCombie W.R."/>
            <person name="Paulsen I."/>
            <person name="Potashkin J."/>
            <person name="Shpakovski G.V."/>
            <person name="Ussery D."/>
            <person name="Barrell B.G."/>
            <person name="Nurse P."/>
        </authorList>
    </citation>
    <scope>NUCLEOTIDE SEQUENCE [LARGE SCALE GENOMIC DNA]</scope>
    <source>
        <strain>972 / ATCC 24843</strain>
    </source>
</reference>
<reference key="2">
    <citation type="journal article" date="2000" name="Genes Cells">
        <title>Large-scale screening of intracellular protein localization in living fission yeast cells by the use of a GFP-fusion genomic DNA library.</title>
        <authorList>
            <person name="Ding D.-Q."/>
            <person name="Tomita Y."/>
            <person name="Yamamoto A."/>
            <person name="Chikashige Y."/>
            <person name="Haraguchi T."/>
            <person name="Hiraoka Y."/>
        </authorList>
    </citation>
    <scope>NUCLEOTIDE SEQUENCE [LARGE SCALE GENOMIC DNA] OF 515-729</scope>
    <scope>SUBCELLULAR LOCATION</scope>
    <source>
        <strain>ATCC 38364 / 968</strain>
    </source>
</reference>
<reference key="3">
    <citation type="journal article" date="2006" name="Nat. Biotechnol.">
        <title>ORFeome cloning and global analysis of protein localization in the fission yeast Schizosaccharomyces pombe.</title>
        <authorList>
            <person name="Matsuyama A."/>
            <person name="Arai R."/>
            <person name="Yashiroda Y."/>
            <person name="Shirai A."/>
            <person name="Kamata A."/>
            <person name="Sekido S."/>
            <person name="Kobayashi Y."/>
            <person name="Hashimoto A."/>
            <person name="Hamamoto M."/>
            <person name="Hiraoka Y."/>
            <person name="Horinouchi S."/>
            <person name="Yoshida M."/>
        </authorList>
    </citation>
    <scope>SUBCELLULAR LOCATION [LARGE SCALE ANALYSIS]</scope>
</reference>
<reference key="4">
    <citation type="journal article" date="2008" name="J. Proteome Res.">
        <title>Phosphoproteome analysis of fission yeast.</title>
        <authorList>
            <person name="Wilson-Grady J.T."/>
            <person name="Villen J."/>
            <person name="Gygi S.P."/>
        </authorList>
    </citation>
    <scope>PHOSPHORYLATION [LARGE SCALE ANALYSIS] AT SER-80</scope>
    <scope>IDENTIFICATION BY MASS SPECTROMETRY</scope>
</reference>
<comment type="subcellular location">
    <subcellularLocation>
        <location evidence="8">Membrane</location>
        <topology evidence="8">Single-pass membrane protein</topology>
    </subcellularLocation>
    <text evidence="5 6">Localizes to cytoplasmic punctate structures.</text>
</comment>
<comment type="similarity">
    <text evidence="8">Belongs to the YSP2 family.</text>
</comment>
<accession>O42976</accession>
<accession>Q9USA4</accession>
<feature type="chain" id="PRO_0000374037" description="Uncharacterized membrane protein C20F10.07">
    <location>
        <begin position="1"/>
        <end position="764"/>
    </location>
</feature>
<feature type="topological domain" description="Lumenal" evidence="1">
    <location>
        <begin position="1"/>
        <end position="646"/>
    </location>
</feature>
<feature type="transmembrane region" description="Helical" evidence="2">
    <location>
        <begin position="647"/>
        <end position="667"/>
    </location>
</feature>
<feature type="topological domain" description="Cytoplasmic" evidence="1">
    <location>
        <begin position="668"/>
        <end position="764"/>
    </location>
</feature>
<feature type="domain" description="GRAM">
    <location>
        <begin position="197"/>
        <end position="264"/>
    </location>
</feature>
<feature type="domain" description="VASt" evidence="3">
    <location>
        <begin position="432"/>
        <end position="598"/>
    </location>
</feature>
<feature type="region of interest" description="Disordered" evidence="4">
    <location>
        <begin position="22"/>
        <end position="173"/>
    </location>
</feature>
<feature type="region of interest" description="Disordered" evidence="4">
    <location>
        <begin position="320"/>
        <end position="406"/>
    </location>
</feature>
<feature type="region of interest" description="Disordered" evidence="4">
    <location>
        <begin position="598"/>
        <end position="626"/>
    </location>
</feature>
<feature type="compositionally biased region" description="Polar residues" evidence="4">
    <location>
        <begin position="25"/>
        <end position="41"/>
    </location>
</feature>
<feature type="compositionally biased region" description="Polar residues" evidence="4">
    <location>
        <begin position="61"/>
        <end position="82"/>
    </location>
</feature>
<feature type="compositionally biased region" description="Acidic residues" evidence="4">
    <location>
        <begin position="98"/>
        <end position="113"/>
    </location>
</feature>
<feature type="compositionally biased region" description="Basic and acidic residues" evidence="4">
    <location>
        <begin position="118"/>
        <end position="145"/>
    </location>
</feature>
<feature type="compositionally biased region" description="Polar residues" evidence="4">
    <location>
        <begin position="158"/>
        <end position="173"/>
    </location>
</feature>
<feature type="compositionally biased region" description="Low complexity" evidence="4">
    <location>
        <begin position="321"/>
        <end position="330"/>
    </location>
</feature>
<feature type="compositionally biased region" description="Polar residues" evidence="4">
    <location>
        <begin position="331"/>
        <end position="340"/>
    </location>
</feature>
<feature type="compositionally biased region" description="Acidic residues" evidence="4">
    <location>
        <begin position="352"/>
        <end position="371"/>
    </location>
</feature>
<feature type="compositionally biased region" description="Polar residues" evidence="4">
    <location>
        <begin position="389"/>
        <end position="399"/>
    </location>
</feature>
<feature type="compositionally biased region" description="Basic residues" evidence="4">
    <location>
        <begin position="598"/>
        <end position="613"/>
    </location>
</feature>
<feature type="modified residue" description="Phosphoserine" evidence="7">
    <location>
        <position position="80"/>
    </location>
</feature>
<feature type="glycosylation site" description="N-linked (GlcNAc...) asparagine" evidence="2">
    <location>
        <position position="23"/>
    </location>
</feature>
<feature type="glycosylation site" description="N-linked (GlcNAc...) asparagine" evidence="2">
    <location>
        <position position="118"/>
    </location>
</feature>
<feature type="glycosylation site" description="N-linked (GlcNAc...) asparagine" evidence="2">
    <location>
        <position position="240"/>
    </location>
</feature>
<feature type="glycosylation site" description="N-linked (GlcNAc...) asparagine" evidence="2">
    <location>
        <position position="330"/>
    </location>
</feature>
<feature type="glycosylation site" description="N-linked (GlcNAc...) asparagine" evidence="2">
    <location>
        <position position="364"/>
    </location>
</feature>
<feature type="glycosylation site" description="N-linked (GlcNAc...) asparagine" evidence="2">
    <location>
        <position position="376"/>
    </location>
</feature>
<feature type="glycosylation site" description="N-linked (GlcNAc...) asparagine" evidence="2">
    <location>
        <position position="442"/>
    </location>
</feature>
<feature type="glycosylation site" description="N-linked (GlcNAc...) asparagine" evidence="2">
    <location>
        <position position="554"/>
    </location>
</feature>
<feature type="glycosylation site" description="N-linked (GlcNAc...) asparagine" evidence="2">
    <location>
        <position position="627"/>
    </location>
</feature>
<sequence>MKEENGFAGFLNTAVNRLSGVLNDTAPTKSQSLKNGVNNEGNRGFSLFRNPRFMSDEKLSSEASSHSTLGQQQARDGRQSPSKEAPFGEGELKLENFENQENEADEAENEETSYSEQNHTENTEEIAEESRPLERTHSGSNHHEASSTGHLNLPPLENTLSQGSAITAPSRKVSITSSNGVSARLSGYAFANSKRNRDFHRIFKVLPPEDHLIDDYGCALQRDIFLHGRMYLSESHICFNSSIFGWVTNIVIPVTEIVSVEKKSTAVVFPNAIQITTLHARYIFASFISRDTTYQLIIAIWKNTHPFLTTLANGHGVMDASGNHHSGSSNQSINADSSAGSEGVDEGTSTEANDESSEDDDEDNNTDEANEDAQSNVSDESPKGEGSSHSDNVVLSDGNSVKKMNEDGADTSLLSVSEVTSHPPTEWTGSPLAHVLCSDVVNLSVSTVFNLLCGSDTTWIINFFKSEKLTEIKIGKWEKIDDKWNRKVQYIKPVAPPYRQTSCYITDTIQHLDINNYIEILSTTSTPDVPSGTSFVVKTLYALSWAHSSKTKLNISYSVEWSKSSWLKGPIEKGAQEGQASYVKDLLTAFENYKVSPKGRRKKITKHTKKKNKHASETSVAPEKVDNSSIEQSSSFLTKLYTFPFTIITWLMHPTHLLLVVMFSMLVLQWWYMQQILHAELPSTSSRSDSSRDLDFDHIPMDDTAFKLWITSRLDSVERDRDFVYENSDPNLEHGKIKIATDYMERRLKKLKERLRKLEASGYI</sequence>
<name>YGZ7_SCHPO</name>
<protein>
    <recommendedName>
        <fullName>Uncharacterized membrane protein C20F10.07</fullName>
    </recommendedName>
</protein>
<gene>
    <name type="ORF">SPBC20F10.07</name>
</gene>
<dbReference type="EMBL" id="CU329671">
    <property type="protein sequence ID" value="CAA16847.1"/>
    <property type="molecule type" value="Genomic_DNA"/>
</dbReference>
<dbReference type="EMBL" id="AB027914">
    <property type="protein sequence ID" value="BAA87218.1"/>
    <property type="molecule type" value="Genomic_DNA"/>
</dbReference>
<dbReference type="PIR" id="T39878">
    <property type="entry name" value="T39878"/>
</dbReference>
<dbReference type="SMR" id="O42976"/>
<dbReference type="BioGRID" id="277227">
    <property type="interactions" value="11"/>
</dbReference>
<dbReference type="FunCoup" id="O42976">
    <property type="interactions" value="125"/>
</dbReference>
<dbReference type="STRING" id="284812.O42976"/>
<dbReference type="iPTMnet" id="O42976"/>
<dbReference type="PaxDb" id="4896-SPBC20F10.07.1"/>
<dbReference type="EnsemblFungi" id="SPBC20F10.07.1">
    <property type="protein sequence ID" value="SPBC20F10.07.1:pep"/>
    <property type="gene ID" value="SPBC20F10.07"/>
</dbReference>
<dbReference type="KEGG" id="spo:2540703"/>
<dbReference type="PomBase" id="SPBC20F10.07"/>
<dbReference type="VEuPathDB" id="FungiDB:SPBC20F10.07"/>
<dbReference type="eggNOG" id="KOG1032">
    <property type="taxonomic scope" value="Eukaryota"/>
</dbReference>
<dbReference type="HOGENOM" id="CLU_375149_0_0_1"/>
<dbReference type="InParanoid" id="O42976"/>
<dbReference type="OMA" id="YIKPVAP"/>
<dbReference type="PhylomeDB" id="O42976"/>
<dbReference type="PRO" id="PR:O42976"/>
<dbReference type="Proteomes" id="UP000002485">
    <property type="component" value="Chromosome II"/>
</dbReference>
<dbReference type="GO" id="GO:0032541">
    <property type="term" value="C:cortical endoplasmic reticulum"/>
    <property type="evidence" value="ECO:0000318"/>
    <property type="project" value="GO_Central"/>
</dbReference>
<dbReference type="GO" id="GO:0005789">
    <property type="term" value="C:endoplasmic reticulum membrane"/>
    <property type="evidence" value="ECO:0000318"/>
    <property type="project" value="GO_Central"/>
</dbReference>
<dbReference type="GO" id="GO:0140268">
    <property type="term" value="C:endoplasmic reticulum-plasma membrane contact site"/>
    <property type="evidence" value="ECO:0000314"/>
    <property type="project" value="PomBase"/>
</dbReference>
<dbReference type="GO" id="GO:0005739">
    <property type="term" value="C:mitochondrion"/>
    <property type="evidence" value="ECO:0000318"/>
    <property type="project" value="GO_Central"/>
</dbReference>
<dbReference type="GO" id="GO:0071561">
    <property type="term" value="C:nucleus-vacuole junction"/>
    <property type="evidence" value="ECO:0000266"/>
    <property type="project" value="PomBase"/>
</dbReference>
<dbReference type="GO" id="GO:1990578">
    <property type="term" value="C:perinuclear endoplasmic reticulum membrane"/>
    <property type="evidence" value="ECO:0000314"/>
    <property type="project" value="PomBase"/>
</dbReference>
<dbReference type="GO" id="GO:0005886">
    <property type="term" value="C:plasma membrane"/>
    <property type="evidence" value="ECO:0000318"/>
    <property type="project" value="GO_Central"/>
</dbReference>
<dbReference type="GO" id="GO:0008289">
    <property type="term" value="F:lipid binding"/>
    <property type="evidence" value="ECO:0000269"/>
    <property type="project" value="PomBase"/>
</dbReference>
<dbReference type="GO" id="GO:0032934">
    <property type="term" value="F:sterol binding"/>
    <property type="evidence" value="ECO:0000318"/>
    <property type="project" value="GO_Central"/>
</dbReference>
<dbReference type="GO" id="GO:0120015">
    <property type="term" value="F:sterol transfer activity"/>
    <property type="evidence" value="ECO:0000315"/>
    <property type="project" value="PomBase"/>
</dbReference>
<dbReference type="GO" id="GO:0120011">
    <property type="term" value="P:intermembrane sterol transfer"/>
    <property type="evidence" value="ECO:0000269"/>
    <property type="project" value="PomBase"/>
</dbReference>
<dbReference type="GO" id="GO:0032366">
    <property type="term" value="P:intracellular sterol transport"/>
    <property type="evidence" value="ECO:0000318"/>
    <property type="project" value="GO_Central"/>
</dbReference>
<dbReference type="CDD" id="cd13220">
    <property type="entry name" value="PH-GRAM_GRAMDC"/>
    <property type="match status" value="1"/>
</dbReference>
<dbReference type="FunFam" id="2.30.29.30:FF:000008">
    <property type="entry name" value="GRAM domain containing 1B"/>
    <property type="match status" value="1"/>
</dbReference>
<dbReference type="Gene3D" id="2.30.29.30">
    <property type="entry name" value="Pleckstrin-homology domain (PH domain)/Phosphotyrosine-binding domain (PTB)"/>
    <property type="match status" value="1"/>
</dbReference>
<dbReference type="InterPro" id="IPR051482">
    <property type="entry name" value="Cholesterol_transport"/>
</dbReference>
<dbReference type="InterPro" id="IPR004182">
    <property type="entry name" value="GRAM"/>
</dbReference>
<dbReference type="InterPro" id="IPR011993">
    <property type="entry name" value="PH-like_dom_sf"/>
</dbReference>
<dbReference type="InterPro" id="IPR031968">
    <property type="entry name" value="VASt"/>
</dbReference>
<dbReference type="PANTHER" id="PTHR23319">
    <property type="entry name" value="GRAM DOMAIN CONTAINING 1B, ISOFORM E"/>
    <property type="match status" value="1"/>
</dbReference>
<dbReference type="PANTHER" id="PTHR23319:SF4">
    <property type="entry name" value="GRAM DOMAIN CONTAINING 1B, ISOFORM E"/>
    <property type="match status" value="1"/>
</dbReference>
<dbReference type="Pfam" id="PF02893">
    <property type="entry name" value="GRAM"/>
    <property type="match status" value="1"/>
</dbReference>
<dbReference type="Pfam" id="PF16016">
    <property type="entry name" value="VASt"/>
    <property type="match status" value="1"/>
</dbReference>
<dbReference type="SMART" id="SM00568">
    <property type="entry name" value="GRAM"/>
    <property type="match status" value="1"/>
</dbReference>
<dbReference type="PROSITE" id="PS51778">
    <property type="entry name" value="VAST"/>
    <property type="match status" value="1"/>
</dbReference>
<organism>
    <name type="scientific">Schizosaccharomyces pombe (strain 972 / ATCC 24843)</name>
    <name type="common">Fission yeast</name>
    <dbReference type="NCBI Taxonomy" id="284812"/>
    <lineage>
        <taxon>Eukaryota</taxon>
        <taxon>Fungi</taxon>
        <taxon>Dikarya</taxon>
        <taxon>Ascomycota</taxon>
        <taxon>Taphrinomycotina</taxon>
        <taxon>Schizosaccharomycetes</taxon>
        <taxon>Schizosaccharomycetales</taxon>
        <taxon>Schizosaccharomycetaceae</taxon>
        <taxon>Schizosaccharomyces</taxon>
    </lineage>
</organism>
<keyword id="KW-0325">Glycoprotein</keyword>
<keyword id="KW-0472">Membrane</keyword>
<keyword id="KW-0597">Phosphoprotein</keyword>
<keyword id="KW-1185">Reference proteome</keyword>
<keyword id="KW-0812">Transmembrane</keyword>
<keyword id="KW-1133">Transmembrane helix</keyword>
<evidence type="ECO:0000250" key="1"/>
<evidence type="ECO:0000255" key="2"/>
<evidence type="ECO:0000255" key="3">
    <source>
        <dbReference type="PROSITE-ProRule" id="PRU01114"/>
    </source>
</evidence>
<evidence type="ECO:0000256" key="4">
    <source>
        <dbReference type="SAM" id="MobiDB-lite"/>
    </source>
</evidence>
<evidence type="ECO:0000269" key="5">
    <source>
    </source>
</evidence>
<evidence type="ECO:0000269" key="6">
    <source>
    </source>
</evidence>
<evidence type="ECO:0000269" key="7">
    <source>
    </source>
</evidence>
<evidence type="ECO:0000305" key="8"/>
<proteinExistence type="evidence at protein level"/>